<accession>B0BSH0</accession>
<sequence>MKKYTKYLPLLLIIPFLAACGSSSPKKSKRTKTRVDYNTKDTNGLDILTGQFSHNIDDIWGSNELLVASKKDYVKYTDKFYTRSHISFEDGQITIETLGDQNHLRNSIIHTLLMGSDPKGIDLFASGDAPISSNPFLAGQVNDQFGRDINNIAIANDFATYLIQNKLQTRRLQNGRTVTYVAIKMVAGHIEVRARQYLPLVRKMAKRYGIEPSLILGIMEVESAFNPYAVSYANAIGLMQVVPRTAGRDIFARKGFDGQPDRAYLYNPSQNIDSGTLYLAILRDEYLEGITNPTAKRYAMISAYNSGAGAVLKVFDYDKYDAIDRINELSPDAVYRILTTAHPSSQARNYLKKVSKAREKYLHIR</sequence>
<comment type="function">
    <text evidence="1">Murein-degrading enzyme. May play a role in recycling of muropeptides during cell elongation and/or cell division.</text>
</comment>
<comment type="catalytic activity">
    <reaction evidence="1">
        <text>Exolytic cleavage of the (1-&gt;4)-beta-glycosidic linkage between N-acetylmuramic acid (MurNAc) and N-acetylglucosamine (GlcNAc) residues in peptidoglycan, from either the reducing or the non-reducing ends of the peptidoglycan chains, with concomitant formation of a 1,6-anhydrobond in the MurNAc residue.</text>
        <dbReference type="EC" id="4.2.2.n1"/>
    </reaction>
</comment>
<comment type="subcellular location">
    <subcellularLocation>
        <location evidence="1">Cell outer membrane</location>
        <topology evidence="1">Lipid-anchor</topology>
    </subcellularLocation>
</comment>
<comment type="similarity">
    <text evidence="1">Belongs to the transglycosylase Slt family.</text>
</comment>
<proteinExistence type="inferred from homology"/>
<feature type="signal peptide" evidence="1">
    <location>
        <begin position="1"/>
        <end position="19"/>
    </location>
</feature>
<feature type="chain" id="PRO_1000185916" description="Membrane-bound lytic murein transglycosylase C">
    <location>
        <begin position="20"/>
        <end position="365"/>
    </location>
</feature>
<feature type="lipid moiety-binding region" description="N-palmitoyl cysteine" evidence="1">
    <location>
        <position position="20"/>
    </location>
</feature>
<feature type="lipid moiety-binding region" description="S-diacylglycerol cysteine" evidence="1">
    <location>
        <position position="20"/>
    </location>
</feature>
<reference key="1">
    <citation type="journal article" date="2008" name="PLoS ONE">
        <title>Genome biology of Actinobacillus pleuropneumoniae JL03, an isolate of serotype 3 prevalent in China.</title>
        <authorList>
            <person name="Xu Z."/>
            <person name="Zhou Y."/>
            <person name="Li L."/>
            <person name="Zhou R."/>
            <person name="Xiao S."/>
            <person name="Wan Y."/>
            <person name="Zhang S."/>
            <person name="Wang K."/>
            <person name="Li W."/>
            <person name="Li L."/>
            <person name="Jin H."/>
            <person name="Kang M."/>
            <person name="Dalai B."/>
            <person name="Li T."/>
            <person name="Liu L."/>
            <person name="Cheng Y."/>
            <person name="Zhang L."/>
            <person name="Xu T."/>
            <person name="Zheng H."/>
            <person name="Pu S."/>
            <person name="Wang B."/>
            <person name="Gu W."/>
            <person name="Zhang X.L."/>
            <person name="Zhu G.-F."/>
            <person name="Wang S."/>
            <person name="Zhao G.-P."/>
            <person name="Chen H."/>
        </authorList>
    </citation>
    <scope>NUCLEOTIDE SEQUENCE [LARGE SCALE GENOMIC DNA]</scope>
    <source>
        <strain>JL03</strain>
    </source>
</reference>
<name>MLTC_ACTPJ</name>
<dbReference type="EC" id="4.2.2.n1" evidence="1"/>
<dbReference type="EMBL" id="CP000687">
    <property type="protein sequence ID" value="ABY70327.1"/>
    <property type="molecule type" value="Genomic_DNA"/>
</dbReference>
<dbReference type="RefSeq" id="WP_005599253.1">
    <property type="nucleotide sequence ID" value="NC_010278.1"/>
</dbReference>
<dbReference type="SMR" id="B0BSH0"/>
<dbReference type="CAZy" id="GH23">
    <property type="family name" value="Glycoside Hydrolase Family 23"/>
</dbReference>
<dbReference type="GeneID" id="48600031"/>
<dbReference type="KEGG" id="apj:APJL_1777"/>
<dbReference type="HOGENOM" id="CLU_044583_0_0_6"/>
<dbReference type="Proteomes" id="UP000008547">
    <property type="component" value="Chromosome"/>
</dbReference>
<dbReference type="GO" id="GO:0009279">
    <property type="term" value="C:cell outer membrane"/>
    <property type="evidence" value="ECO:0007669"/>
    <property type="project" value="UniProtKB-SubCell"/>
</dbReference>
<dbReference type="GO" id="GO:0016798">
    <property type="term" value="F:hydrolase activity, acting on glycosyl bonds"/>
    <property type="evidence" value="ECO:0007669"/>
    <property type="project" value="InterPro"/>
</dbReference>
<dbReference type="GO" id="GO:0008933">
    <property type="term" value="F:peptidoglycan lytic transglycosylase activity"/>
    <property type="evidence" value="ECO:0007669"/>
    <property type="project" value="UniProtKB-UniRule"/>
</dbReference>
<dbReference type="GO" id="GO:0016998">
    <property type="term" value="P:cell wall macromolecule catabolic process"/>
    <property type="evidence" value="ECO:0007669"/>
    <property type="project" value="UniProtKB-UniRule"/>
</dbReference>
<dbReference type="GO" id="GO:0071555">
    <property type="term" value="P:cell wall organization"/>
    <property type="evidence" value="ECO:0007669"/>
    <property type="project" value="UniProtKB-KW"/>
</dbReference>
<dbReference type="GO" id="GO:0000270">
    <property type="term" value="P:peptidoglycan metabolic process"/>
    <property type="evidence" value="ECO:0007669"/>
    <property type="project" value="InterPro"/>
</dbReference>
<dbReference type="CDD" id="cd16893">
    <property type="entry name" value="LT_MltC_MltE"/>
    <property type="match status" value="1"/>
</dbReference>
<dbReference type="Gene3D" id="1.10.530.10">
    <property type="match status" value="1"/>
</dbReference>
<dbReference type="HAMAP" id="MF_01616">
    <property type="entry name" value="MltC"/>
    <property type="match status" value="1"/>
</dbReference>
<dbReference type="InterPro" id="IPR023346">
    <property type="entry name" value="Lysozyme-like_dom_sf"/>
</dbReference>
<dbReference type="InterPro" id="IPR023664">
    <property type="entry name" value="Murein_transglycosylaseC"/>
</dbReference>
<dbReference type="InterPro" id="IPR024570">
    <property type="entry name" value="Murein_transglycosylaseC_N"/>
</dbReference>
<dbReference type="InterPro" id="IPR000189">
    <property type="entry name" value="Transglyc_AS"/>
</dbReference>
<dbReference type="InterPro" id="IPR008258">
    <property type="entry name" value="Transglycosylase_SLT_dom_1"/>
</dbReference>
<dbReference type="NCBIfam" id="NF008670">
    <property type="entry name" value="PRK11671.1"/>
    <property type="match status" value="1"/>
</dbReference>
<dbReference type="PANTHER" id="PTHR37423:SF2">
    <property type="entry name" value="MEMBRANE-BOUND LYTIC MUREIN TRANSGLYCOSYLASE C"/>
    <property type="match status" value="1"/>
</dbReference>
<dbReference type="PANTHER" id="PTHR37423">
    <property type="entry name" value="SOLUBLE LYTIC MUREIN TRANSGLYCOSYLASE-RELATED"/>
    <property type="match status" value="1"/>
</dbReference>
<dbReference type="Pfam" id="PF11873">
    <property type="entry name" value="Mltc_N"/>
    <property type="match status" value="1"/>
</dbReference>
<dbReference type="Pfam" id="PF01464">
    <property type="entry name" value="SLT"/>
    <property type="match status" value="1"/>
</dbReference>
<dbReference type="SUPFAM" id="SSF53955">
    <property type="entry name" value="Lysozyme-like"/>
    <property type="match status" value="1"/>
</dbReference>
<dbReference type="PROSITE" id="PS51257">
    <property type="entry name" value="PROKAR_LIPOPROTEIN"/>
    <property type="match status" value="1"/>
</dbReference>
<dbReference type="PROSITE" id="PS00922">
    <property type="entry name" value="TRANSGLYCOSYLASE"/>
    <property type="match status" value="1"/>
</dbReference>
<organism>
    <name type="scientific">Actinobacillus pleuropneumoniae serotype 3 (strain JL03)</name>
    <dbReference type="NCBI Taxonomy" id="434271"/>
    <lineage>
        <taxon>Bacteria</taxon>
        <taxon>Pseudomonadati</taxon>
        <taxon>Pseudomonadota</taxon>
        <taxon>Gammaproteobacteria</taxon>
        <taxon>Pasteurellales</taxon>
        <taxon>Pasteurellaceae</taxon>
        <taxon>Actinobacillus</taxon>
    </lineage>
</organism>
<evidence type="ECO:0000255" key="1">
    <source>
        <dbReference type="HAMAP-Rule" id="MF_01616"/>
    </source>
</evidence>
<keyword id="KW-0998">Cell outer membrane</keyword>
<keyword id="KW-0961">Cell wall biogenesis/degradation</keyword>
<keyword id="KW-0449">Lipoprotein</keyword>
<keyword id="KW-0456">Lyase</keyword>
<keyword id="KW-0472">Membrane</keyword>
<keyword id="KW-0564">Palmitate</keyword>
<keyword id="KW-0732">Signal</keyword>
<gene>
    <name evidence="1" type="primary">mltC</name>
    <name type="ordered locus">APJL_1777</name>
</gene>
<protein>
    <recommendedName>
        <fullName evidence="1">Membrane-bound lytic murein transglycosylase C</fullName>
        <ecNumber evidence="1">4.2.2.n1</ecNumber>
    </recommendedName>
    <alternativeName>
        <fullName evidence="1">Murein lyase C</fullName>
    </alternativeName>
</protein>